<evidence type="ECO:0000255" key="1">
    <source>
        <dbReference type="HAMAP-Rule" id="MF_00963"/>
    </source>
</evidence>
<evidence type="ECO:0000256" key="2">
    <source>
        <dbReference type="SAM" id="MobiDB-lite"/>
    </source>
</evidence>
<evidence type="ECO:0000305" key="3"/>
<protein>
    <recommendedName>
        <fullName evidence="1">RNA polymerase sigma factor SigA</fullName>
    </recommendedName>
    <alternativeName>
        <fullName>Sigma-A</fullName>
    </alternativeName>
</protein>
<organism>
    <name type="scientific">Mycoplasma genitalium (strain ATCC 33530 / DSM 19775 / NCTC 10195 / G37)</name>
    <name type="common">Mycoplasmoides genitalium</name>
    <dbReference type="NCBI Taxonomy" id="243273"/>
    <lineage>
        <taxon>Bacteria</taxon>
        <taxon>Bacillati</taxon>
        <taxon>Mycoplasmatota</taxon>
        <taxon>Mycoplasmoidales</taxon>
        <taxon>Mycoplasmoidaceae</taxon>
        <taxon>Mycoplasmoides</taxon>
    </lineage>
</organism>
<name>SIGA_MYCGE</name>
<gene>
    <name evidence="1" type="primary">sigA</name>
    <name type="synonym">rpoD</name>
    <name type="ordered locus">MG249</name>
</gene>
<sequence>MSTDKKTLGEKPNSTKPELSEELIAELKKQRILEKNRPYKKMIYVDNKVQRKHRHENIAFLKTLHENKESDVPKKRRGRKPKHAPLKEKNNLKLFDILEGSLKSHIENDDTNTVINLLTEAWEKKSKKKQKNITLSNKEIISVLAKFELPEDEIIYVLDELRDKGIQLQHDVEEHIHEFRANQDLSIIDEDIEELTSKNISNRDKVDDNVRFFLGSLDFSKMLDFESEQRIAKVLNSTDEESRKYAINQLVTSNLRLVVSIAKKHLERGLDFNDLIQEGNLGLLKAISKFNWSLGNKFSTYATWWIKQAITRAIADQARTVRIPVHMVETINRLAKAERALYQELGREPTDEELAEKMGGQAEGFNVKKIAEIKRLSLDPVSLDKTVGHDEESQFGDFVKDTDAQTPDEFTESRSNSEKIDELLNNNLSEQEELIVRMRIGMPPYNEPKTLDEVGQKILIPREKIRQIENKAIRKLRHAVRNNPISMSFLRINEKKD</sequence>
<accession>P47491</accession>
<accession>Q49487</accession>
<reference key="1">
    <citation type="journal article" date="1995" name="Science">
        <title>The minimal gene complement of Mycoplasma genitalium.</title>
        <authorList>
            <person name="Fraser C.M."/>
            <person name="Gocayne J.D."/>
            <person name="White O."/>
            <person name="Adams M.D."/>
            <person name="Clayton R.A."/>
            <person name="Fleischmann R.D."/>
            <person name="Bult C.J."/>
            <person name="Kerlavage A.R."/>
            <person name="Sutton G.G."/>
            <person name="Kelley J.M."/>
            <person name="Fritchman J.L."/>
            <person name="Weidman J.F."/>
            <person name="Small K.V."/>
            <person name="Sandusky M."/>
            <person name="Fuhrmann J.L."/>
            <person name="Nguyen D.T."/>
            <person name="Utterback T.R."/>
            <person name="Saudek D.M."/>
            <person name="Phillips C.A."/>
            <person name="Merrick J.M."/>
            <person name="Tomb J.-F."/>
            <person name="Dougherty B.A."/>
            <person name="Bott K.F."/>
            <person name="Hu P.-C."/>
            <person name="Lucier T.S."/>
            <person name="Peterson S.N."/>
            <person name="Smith H.O."/>
            <person name="Hutchison C.A. III"/>
            <person name="Venter J.C."/>
        </authorList>
    </citation>
    <scope>NUCLEOTIDE SEQUENCE [LARGE SCALE GENOMIC DNA]</scope>
    <source>
        <strain>ATCC 33530 / DSM 19775 / NCTC 10195 / G37</strain>
    </source>
</reference>
<reference key="2">
    <citation type="journal article" date="1991" name="Nucleic Acids Res.">
        <title>A random sequencing approach for placing markers on the physical map of Mycoplasma genitalium.</title>
        <authorList>
            <person name="Peterson S.N."/>
            <person name="Schramm N."/>
            <person name="Hu P.-C."/>
            <person name="Bott K.F."/>
            <person name="Hutchison C.A. III"/>
        </authorList>
    </citation>
    <scope>NUCLEOTIDE SEQUENCE [GENOMIC DNA] OF 222-323</scope>
    <source>
        <strain>ATCC 33530 / DSM 19775 / NCTC 10195 / G37</strain>
    </source>
</reference>
<feature type="chain" id="PRO_0000093899" description="RNA polymerase sigma factor SigA">
    <location>
        <begin position="1"/>
        <end position="497"/>
    </location>
</feature>
<feature type="DNA-binding region" description="H-T-H motif" evidence="1">
    <location>
        <begin position="451"/>
        <end position="470"/>
    </location>
</feature>
<feature type="region of interest" description="Disordered" evidence="2">
    <location>
        <begin position="1"/>
        <end position="20"/>
    </location>
</feature>
<feature type="region of interest" description="Disordered" evidence="2">
    <location>
        <begin position="62"/>
        <end position="86"/>
    </location>
</feature>
<feature type="region of interest" description="Sigma-70 factor domain-2" evidence="1">
    <location>
        <begin position="250"/>
        <end position="320"/>
    </location>
</feature>
<feature type="region of interest" description="Sigma-70 factor domain-3" evidence="1">
    <location>
        <begin position="329"/>
        <end position="410"/>
    </location>
</feature>
<feature type="region of interest" description="Sigma-70 factor domain-4" evidence="1">
    <location>
        <begin position="423"/>
        <end position="478"/>
    </location>
</feature>
<feature type="short sequence motif" description="Interaction with polymerase core subunit RpoC">
    <location>
        <begin position="274"/>
        <end position="277"/>
    </location>
</feature>
<feature type="compositionally biased region" description="Basic and acidic residues" evidence="2">
    <location>
        <begin position="63"/>
        <end position="73"/>
    </location>
</feature>
<feature type="compositionally biased region" description="Basic residues" evidence="2">
    <location>
        <begin position="74"/>
        <end position="84"/>
    </location>
</feature>
<feature type="sequence conflict" description="In Ref. 2." evidence="3" ref="2">
    <original>DFESEQRIA</original>
    <variation>NLNSGLP</variation>
    <location>
        <begin position="224"/>
        <end position="232"/>
    </location>
</feature>
<proteinExistence type="inferred from homology"/>
<comment type="function">
    <text evidence="1">Sigma factors are initiation factors that promote the attachment of RNA polymerase to specific initiation sites and are then released. This sigma factor is the primary sigma factor during exponential growth.</text>
</comment>
<comment type="subunit">
    <text evidence="1">Interacts transiently with the RNA polymerase catalytic core.</text>
</comment>
<comment type="subcellular location">
    <subcellularLocation>
        <location evidence="1">Cytoplasm</location>
    </subcellularLocation>
</comment>
<comment type="similarity">
    <text evidence="1">Belongs to the sigma-70 factor family. RpoD/SigA subfamily.</text>
</comment>
<dbReference type="EMBL" id="L43967">
    <property type="protein sequence ID" value="AAC71469.1"/>
    <property type="molecule type" value="Genomic_DNA"/>
</dbReference>
<dbReference type="EMBL" id="X61535">
    <property type="protein sequence ID" value="CAB98133.1"/>
    <property type="molecule type" value="Genomic_DNA"/>
</dbReference>
<dbReference type="PIR" id="E64227">
    <property type="entry name" value="E64227"/>
</dbReference>
<dbReference type="RefSeq" id="WP_009885787.1">
    <property type="nucleotide sequence ID" value="NC_000908.2"/>
</dbReference>
<dbReference type="SMR" id="P47491"/>
<dbReference type="FunCoup" id="P47491">
    <property type="interactions" value="185"/>
</dbReference>
<dbReference type="STRING" id="243273.MG_249"/>
<dbReference type="GeneID" id="88282395"/>
<dbReference type="KEGG" id="mge:MG_249"/>
<dbReference type="eggNOG" id="COG0568">
    <property type="taxonomic scope" value="Bacteria"/>
</dbReference>
<dbReference type="HOGENOM" id="CLU_014793_7_2_14"/>
<dbReference type="InParanoid" id="P47491"/>
<dbReference type="OrthoDB" id="9809557at2"/>
<dbReference type="BioCyc" id="MGEN243273:G1GJ2-296-MONOMER"/>
<dbReference type="Proteomes" id="UP000000807">
    <property type="component" value="Chromosome"/>
</dbReference>
<dbReference type="GO" id="GO:0005737">
    <property type="term" value="C:cytoplasm"/>
    <property type="evidence" value="ECO:0007669"/>
    <property type="project" value="UniProtKB-SubCell"/>
</dbReference>
<dbReference type="GO" id="GO:0003677">
    <property type="term" value="F:DNA binding"/>
    <property type="evidence" value="ECO:0007669"/>
    <property type="project" value="UniProtKB-UniRule"/>
</dbReference>
<dbReference type="GO" id="GO:0016987">
    <property type="term" value="F:sigma factor activity"/>
    <property type="evidence" value="ECO:0007669"/>
    <property type="project" value="UniProtKB-UniRule"/>
</dbReference>
<dbReference type="GO" id="GO:0006352">
    <property type="term" value="P:DNA-templated transcription initiation"/>
    <property type="evidence" value="ECO:0007669"/>
    <property type="project" value="UniProtKB-UniRule"/>
</dbReference>
<dbReference type="Gene3D" id="1.10.601.10">
    <property type="entry name" value="RNA Polymerase Primary Sigma Factor"/>
    <property type="match status" value="1"/>
</dbReference>
<dbReference type="Gene3D" id="1.10.10.10">
    <property type="entry name" value="Winged helix-like DNA-binding domain superfamily/Winged helix DNA-binding domain"/>
    <property type="match status" value="2"/>
</dbReference>
<dbReference type="HAMAP" id="MF_00963">
    <property type="entry name" value="Sigma70_RpoD_SigA"/>
    <property type="match status" value="1"/>
</dbReference>
<dbReference type="InterPro" id="IPR014284">
    <property type="entry name" value="RNA_pol_sigma-70_dom"/>
</dbReference>
<dbReference type="InterPro" id="IPR000943">
    <property type="entry name" value="RNA_pol_sigma70"/>
</dbReference>
<dbReference type="InterPro" id="IPR007627">
    <property type="entry name" value="RNA_pol_sigma70_r2"/>
</dbReference>
<dbReference type="InterPro" id="IPR007624">
    <property type="entry name" value="RNA_pol_sigma70_r3"/>
</dbReference>
<dbReference type="InterPro" id="IPR007630">
    <property type="entry name" value="RNA_pol_sigma70_r4"/>
</dbReference>
<dbReference type="InterPro" id="IPR013325">
    <property type="entry name" value="RNA_pol_sigma_r2"/>
</dbReference>
<dbReference type="InterPro" id="IPR013324">
    <property type="entry name" value="RNA_pol_sigma_r3/r4-like"/>
</dbReference>
<dbReference type="InterPro" id="IPR012760">
    <property type="entry name" value="RNA_pol_sigma_RpoD_C"/>
</dbReference>
<dbReference type="InterPro" id="IPR050239">
    <property type="entry name" value="Sigma-70_RNA_pol_init_factors"/>
</dbReference>
<dbReference type="InterPro" id="IPR028630">
    <property type="entry name" value="Sigma70_RpoD"/>
</dbReference>
<dbReference type="InterPro" id="IPR036388">
    <property type="entry name" value="WH-like_DNA-bd_sf"/>
</dbReference>
<dbReference type="NCBIfam" id="NF004564">
    <property type="entry name" value="PRK05901.2-2"/>
    <property type="match status" value="1"/>
</dbReference>
<dbReference type="NCBIfam" id="TIGR02393">
    <property type="entry name" value="RpoD_Cterm"/>
    <property type="match status" value="1"/>
</dbReference>
<dbReference type="NCBIfam" id="TIGR02937">
    <property type="entry name" value="sigma70-ECF"/>
    <property type="match status" value="1"/>
</dbReference>
<dbReference type="PANTHER" id="PTHR30603">
    <property type="entry name" value="RNA POLYMERASE SIGMA FACTOR RPO"/>
    <property type="match status" value="1"/>
</dbReference>
<dbReference type="PANTHER" id="PTHR30603:SF60">
    <property type="entry name" value="RNA POLYMERASE SIGMA FACTOR RPOD"/>
    <property type="match status" value="1"/>
</dbReference>
<dbReference type="Pfam" id="PF04542">
    <property type="entry name" value="Sigma70_r2"/>
    <property type="match status" value="1"/>
</dbReference>
<dbReference type="Pfam" id="PF04539">
    <property type="entry name" value="Sigma70_r3"/>
    <property type="match status" value="1"/>
</dbReference>
<dbReference type="Pfam" id="PF04545">
    <property type="entry name" value="Sigma70_r4"/>
    <property type="match status" value="1"/>
</dbReference>
<dbReference type="PRINTS" id="PR00046">
    <property type="entry name" value="SIGMA70FCT"/>
</dbReference>
<dbReference type="SUPFAM" id="SSF88946">
    <property type="entry name" value="Sigma2 domain of RNA polymerase sigma factors"/>
    <property type="match status" value="1"/>
</dbReference>
<dbReference type="SUPFAM" id="SSF88659">
    <property type="entry name" value="Sigma3 and sigma4 domains of RNA polymerase sigma factors"/>
    <property type="match status" value="2"/>
</dbReference>
<dbReference type="PROSITE" id="PS00715">
    <property type="entry name" value="SIGMA70_1"/>
    <property type="match status" value="1"/>
</dbReference>
<dbReference type="PROSITE" id="PS00716">
    <property type="entry name" value="SIGMA70_2"/>
    <property type="match status" value="1"/>
</dbReference>
<keyword id="KW-0963">Cytoplasm</keyword>
<keyword id="KW-0238">DNA-binding</keyword>
<keyword id="KW-1185">Reference proteome</keyword>
<keyword id="KW-0731">Sigma factor</keyword>
<keyword id="KW-0804">Transcription</keyword>
<keyword id="KW-0805">Transcription regulation</keyword>